<organism>
    <name type="scientific">Burkholderia pseudomallei (strain 1710b)</name>
    <dbReference type="NCBI Taxonomy" id="320372"/>
    <lineage>
        <taxon>Bacteria</taxon>
        <taxon>Pseudomonadati</taxon>
        <taxon>Pseudomonadota</taxon>
        <taxon>Betaproteobacteria</taxon>
        <taxon>Burkholderiales</taxon>
        <taxon>Burkholderiaceae</taxon>
        <taxon>Burkholderia</taxon>
        <taxon>pseudomallei group</taxon>
    </lineage>
</organism>
<comment type="function">
    <text evidence="1">Catalyzes the condensation of the acetyl group of acetyl-CoA with 3-methyl-2-oxobutanoate (2-ketoisovalerate) to form 3-carboxy-3-hydroxy-4-methylpentanoate (2-isopropylmalate).</text>
</comment>
<comment type="catalytic activity">
    <reaction evidence="1">
        <text>3-methyl-2-oxobutanoate + acetyl-CoA + H2O = (2S)-2-isopropylmalate + CoA + H(+)</text>
        <dbReference type="Rhea" id="RHEA:21524"/>
        <dbReference type="ChEBI" id="CHEBI:1178"/>
        <dbReference type="ChEBI" id="CHEBI:11851"/>
        <dbReference type="ChEBI" id="CHEBI:15377"/>
        <dbReference type="ChEBI" id="CHEBI:15378"/>
        <dbReference type="ChEBI" id="CHEBI:57287"/>
        <dbReference type="ChEBI" id="CHEBI:57288"/>
        <dbReference type="EC" id="2.3.3.13"/>
    </reaction>
</comment>
<comment type="cofactor">
    <cofactor evidence="1">
        <name>Mn(2+)</name>
        <dbReference type="ChEBI" id="CHEBI:29035"/>
    </cofactor>
</comment>
<comment type="pathway">
    <text evidence="1">Amino-acid biosynthesis; L-leucine biosynthesis; L-leucine from 3-methyl-2-oxobutanoate: step 1/4.</text>
</comment>
<comment type="subunit">
    <text evidence="1">Homodimer.</text>
</comment>
<comment type="subcellular location">
    <subcellularLocation>
        <location evidence="1">Cytoplasm</location>
    </subcellularLocation>
</comment>
<comment type="similarity">
    <text evidence="1">Belongs to the alpha-IPM synthase/homocitrate synthase family. LeuA type 1 subfamily.</text>
</comment>
<sequence>MTDKLIIFDTTLRDGEQSPGASMTKEEKIRIAKQLERMKVDVIEAGFAASSNGDFDAIQTIASQVKDSTICSLARANDKDIQRAADALKPANSFRIHTFIATSPLHMEKKLRMTPDQVFEQARLAVRFARKFTDNIEFSPEDGSRSDMDFLCRVLEAVIAEGATTINIADTVGYGVPELYGNLVKTLRERIPNSDKAIFSVHCHNDLGMAVANSLAGVKIGGARQVECTINGLGERAGNTSLEEIVMAVKTRKDYFGLDLGIDTTQIVPASKLVSQITGFVVQPNKAVVGANAFAHASGIHQDGVLKARDTYEIMRAEDVGWTANKIVLGKLSGRNAFKQRLQELGVSLDSEAELNAAFARFKDLADRKAEIFDEDIIAIVTEEESALAQEHEHYKFVSLAQRSETGERPQAKVVFAVDGDEVAGEASGNGPVDATFNAIETEVGSGAELLLYSVNAITTGTQAQGEVTVRLSKSGRIVNGVGTDPDIVAASAKAYIAALNKLYSNADKLNPQRA</sequence>
<reference key="1">
    <citation type="journal article" date="2010" name="Genome Biol. Evol.">
        <title>Continuing evolution of Burkholderia mallei through genome reduction and large-scale rearrangements.</title>
        <authorList>
            <person name="Losada L."/>
            <person name="Ronning C.M."/>
            <person name="DeShazer D."/>
            <person name="Woods D."/>
            <person name="Fedorova N."/>
            <person name="Kim H.S."/>
            <person name="Shabalina S.A."/>
            <person name="Pearson T.R."/>
            <person name="Brinkac L."/>
            <person name="Tan P."/>
            <person name="Nandi T."/>
            <person name="Crabtree J."/>
            <person name="Badger J."/>
            <person name="Beckstrom-Sternberg S."/>
            <person name="Saqib M."/>
            <person name="Schutzer S.E."/>
            <person name="Keim P."/>
            <person name="Nierman W.C."/>
        </authorList>
    </citation>
    <scope>NUCLEOTIDE SEQUENCE [LARGE SCALE GENOMIC DNA]</scope>
    <source>
        <strain>1710b</strain>
    </source>
</reference>
<evidence type="ECO:0000255" key="1">
    <source>
        <dbReference type="HAMAP-Rule" id="MF_01025"/>
    </source>
</evidence>
<dbReference type="EC" id="2.3.3.13" evidence="1"/>
<dbReference type="EMBL" id="CP000124">
    <property type="protein sequence ID" value="ABA50141.1"/>
    <property type="molecule type" value="Genomic_DNA"/>
</dbReference>
<dbReference type="RefSeq" id="WP_004522419.1">
    <property type="nucleotide sequence ID" value="NC_007434.1"/>
</dbReference>
<dbReference type="SMR" id="Q3JUB9"/>
<dbReference type="EnsemblBacteria" id="ABA50141">
    <property type="protein sequence ID" value="ABA50141"/>
    <property type="gene ID" value="BURPS1710b_1424"/>
</dbReference>
<dbReference type="KEGG" id="bpm:BURPS1710b_1424"/>
<dbReference type="HOGENOM" id="CLU_022158_0_1_4"/>
<dbReference type="UniPathway" id="UPA00048">
    <property type="reaction ID" value="UER00070"/>
</dbReference>
<dbReference type="Proteomes" id="UP000002700">
    <property type="component" value="Chromosome I"/>
</dbReference>
<dbReference type="GO" id="GO:0005829">
    <property type="term" value="C:cytosol"/>
    <property type="evidence" value="ECO:0007669"/>
    <property type="project" value="TreeGrafter"/>
</dbReference>
<dbReference type="GO" id="GO:0003852">
    <property type="term" value="F:2-isopropylmalate synthase activity"/>
    <property type="evidence" value="ECO:0007669"/>
    <property type="project" value="UniProtKB-UniRule"/>
</dbReference>
<dbReference type="GO" id="GO:0003985">
    <property type="term" value="F:acetyl-CoA C-acetyltransferase activity"/>
    <property type="evidence" value="ECO:0007669"/>
    <property type="project" value="UniProtKB-UniRule"/>
</dbReference>
<dbReference type="GO" id="GO:0030145">
    <property type="term" value="F:manganese ion binding"/>
    <property type="evidence" value="ECO:0007669"/>
    <property type="project" value="UniProtKB-UniRule"/>
</dbReference>
<dbReference type="GO" id="GO:0009098">
    <property type="term" value="P:L-leucine biosynthetic process"/>
    <property type="evidence" value="ECO:0007669"/>
    <property type="project" value="UniProtKB-UniRule"/>
</dbReference>
<dbReference type="CDD" id="cd07940">
    <property type="entry name" value="DRE_TIM_IPMS"/>
    <property type="match status" value="1"/>
</dbReference>
<dbReference type="FunFam" id="1.10.238.260:FF:000001">
    <property type="entry name" value="2-isopropylmalate synthase"/>
    <property type="match status" value="1"/>
</dbReference>
<dbReference type="FunFam" id="3.20.20.70:FF:000010">
    <property type="entry name" value="2-isopropylmalate synthase"/>
    <property type="match status" value="1"/>
</dbReference>
<dbReference type="FunFam" id="3.30.160.270:FF:000003">
    <property type="entry name" value="2-isopropylmalate synthase"/>
    <property type="match status" value="1"/>
</dbReference>
<dbReference type="Gene3D" id="1.10.238.260">
    <property type="match status" value="1"/>
</dbReference>
<dbReference type="Gene3D" id="3.30.160.270">
    <property type="match status" value="1"/>
</dbReference>
<dbReference type="Gene3D" id="3.20.20.70">
    <property type="entry name" value="Aldolase class I"/>
    <property type="match status" value="1"/>
</dbReference>
<dbReference type="HAMAP" id="MF_01025">
    <property type="entry name" value="LeuA_type1"/>
    <property type="match status" value="1"/>
</dbReference>
<dbReference type="InterPro" id="IPR050073">
    <property type="entry name" value="2-IPM_HCS-like"/>
</dbReference>
<dbReference type="InterPro" id="IPR013709">
    <property type="entry name" value="2-isopropylmalate_synth_dimer"/>
</dbReference>
<dbReference type="InterPro" id="IPR002034">
    <property type="entry name" value="AIPM/Hcit_synth_CS"/>
</dbReference>
<dbReference type="InterPro" id="IPR013785">
    <property type="entry name" value="Aldolase_TIM"/>
</dbReference>
<dbReference type="InterPro" id="IPR054691">
    <property type="entry name" value="LeuA/HCS_post-cat"/>
</dbReference>
<dbReference type="InterPro" id="IPR036230">
    <property type="entry name" value="LeuA_allosteric_dom_sf"/>
</dbReference>
<dbReference type="InterPro" id="IPR005671">
    <property type="entry name" value="LeuA_bact_synth"/>
</dbReference>
<dbReference type="InterPro" id="IPR000891">
    <property type="entry name" value="PYR_CT"/>
</dbReference>
<dbReference type="NCBIfam" id="TIGR00973">
    <property type="entry name" value="leuA_bact"/>
    <property type="match status" value="1"/>
</dbReference>
<dbReference type="NCBIfam" id="NF002086">
    <property type="entry name" value="PRK00915.1-3"/>
    <property type="match status" value="1"/>
</dbReference>
<dbReference type="NCBIfam" id="NF002087">
    <property type="entry name" value="PRK00915.1-4"/>
    <property type="match status" value="1"/>
</dbReference>
<dbReference type="PANTHER" id="PTHR10277:SF9">
    <property type="entry name" value="2-ISOPROPYLMALATE SYNTHASE 1, CHLOROPLASTIC-RELATED"/>
    <property type="match status" value="1"/>
</dbReference>
<dbReference type="PANTHER" id="PTHR10277">
    <property type="entry name" value="HOMOCITRATE SYNTHASE-RELATED"/>
    <property type="match status" value="1"/>
</dbReference>
<dbReference type="Pfam" id="PF22617">
    <property type="entry name" value="HCS_D2"/>
    <property type="match status" value="1"/>
</dbReference>
<dbReference type="Pfam" id="PF00682">
    <property type="entry name" value="HMGL-like"/>
    <property type="match status" value="1"/>
</dbReference>
<dbReference type="Pfam" id="PF08502">
    <property type="entry name" value="LeuA_dimer"/>
    <property type="match status" value="1"/>
</dbReference>
<dbReference type="SMART" id="SM00917">
    <property type="entry name" value="LeuA_dimer"/>
    <property type="match status" value="1"/>
</dbReference>
<dbReference type="SUPFAM" id="SSF110921">
    <property type="entry name" value="2-isopropylmalate synthase LeuA, allosteric (dimerisation) domain"/>
    <property type="match status" value="1"/>
</dbReference>
<dbReference type="SUPFAM" id="SSF51569">
    <property type="entry name" value="Aldolase"/>
    <property type="match status" value="1"/>
</dbReference>
<dbReference type="PROSITE" id="PS00815">
    <property type="entry name" value="AIPM_HOMOCIT_SYNTH_1"/>
    <property type="match status" value="1"/>
</dbReference>
<dbReference type="PROSITE" id="PS00816">
    <property type="entry name" value="AIPM_HOMOCIT_SYNTH_2"/>
    <property type="match status" value="1"/>
</dbReference>
<dbReference type="PROSITE" id="PS50991">
    <property type="entry name" value="PYR_CT"/>
    <property type="match status" value="1"/>
</dbReference>
<gene>
    <name evidence="1" type="primary">leuA</name>
    <name type="ordered locus">BURPS1710b_1424</name>
</gene>
<accession>Q3JUB9</accession>
<keyword id="KW-0028">Amino-acid biosynthesis</keyword>
<keyword id="KW-0100">Branched-chain amino acid biosynthesis</keyword>
<keyword id="KW-0963">Cytoplasm</keyword>
<keyword id="KW-0432">Leucine biosynthesis</keyword>
<keyword id="KW-0464">Manganese</keyword>
<keyword id="KW-0479">Metal-binding</keyword>
<keyword id="KW-0808">Transferase</keyword>
<name>LEU1_BURP1</name>
<proteinExistence type="inferred from homology"/>
<protein>
    <recommendedName>
        <fullName evidence="1">2-isopropylmalate synthase</fullName>
        <ecNumber evidence="1">2.3.3.13</ecNumber>
    </recommendedName>
    <alternativeName>
        <fullName evidence="1">Alpha-IPM synthase</fullName>
    </alternativeName>
    <alternativeName>
        <fullName evidence="1">Alpha-isopropylmalate synthase</fullName>
    </alternativeName>
</protein>
<feature type="chain" id="PRO_1000149152" description="2-isopropylmalate synthase">
    <location>
        <begin position="1"/>
        <end position="515"/>
    </location>
</feature>
<feature type="domain" description="Pyruvate carboxyltransferase" evidence="1">
    <location>
        <begin position="5"/>
        <end position="268"/>
    </location>
</feature>
<feature type="region of interest" description="Regulatory domain" evidence="1">
    <location>
        <begin position="396"/>
        <end position="515"/>
    </location>
</feature>
<feature type="binding site" evidence="1">
    <location>
        <position position="14"/>
    </location>
    <ligand>
        <name>Mn(2+)</name>
        <dbReference type="ChEBI" id="CHEBI:29035"/>
    </ligand>
</feature>
<feature type="binding site" evidence="1">
    <location>
        <position position="202"/>
    </location>
    <ligand>
        <name>Mn(2+)</name>
        <dbReference type="ChEBI" id="CHEBI:29035"/>
    </ligand>
</feature>
<feature type="binding site" evidence="1">
    <location>
        <position position="204"/>
    </location>
    <ligand>
        <name>Mn(2+)</name>
        <dbReference type="ChEBI" id="CHEBI:29035"/>
    </ligand>
</feature>
<feature type="binding site" evidence="1">
    <location>
        <position position="239"/>
    </location>
    <ligand>
        <name>Mn(2+)</name>
        <dbReference type="ChEBI" id="CHEBI:29035"/>
    </ligand>
</feature>